<protein>
    <recommendedName>
        <fullName evidence="1">Phosphoglucosamine mutase</fullName>
        <ecNumber evidence="1">5.4.2.10</ecNumber>
    </recommendedName>
</protein>
<feature type="chain" id="PRO_1000068888" description="Phosphoglucosamine mutase">
    <location>
        <begin position="1"/>
        <end position="448"/>
    </location>
</feature>
<feature type="active site" description="Phosphoserine intermediate" evidence="1">
    <location>
        <position position="100"/>
    </location>
</feature>
<feature type="binding site" description="via phosphate group" evidence="1">
    <location>
        <position position="100"/>
    </location>
    <ligand>
        <name>Mg(2+)</name>
        <dbReference type="ChEBI" id="CHEBI:18420"/>
    </ligand>
</feature>
<feature type="binding site" evidence="1">
    <location>
        <position position="240"/>
    </location>
    <ligand>
        <name>Mg(2+)</name>
        <dbReference type="ChEBI" id="CHEBI:18420"/>
    </ligand>
</feature>
<feature type="binding site" evidence="1">
    <location>
        <position position="242"/>
    </location>
    <ligand>
        <name>Mg(2+)</name>
        <dbReference type="ChEBI" id="CHEBI:18420"/>
    </ligand>
</feature>
<feature type="binding site" evidence="1">
    <location>
        <position position="244"/>
    </location>
    <ligand>
        <name>Mg(2+)</name>
        <dbReference type="ChEBI" id="CHEBI:18420"/>
    </ligand>
</feature>
<feature type="modified residue" description="Phosphoserine" evidence="1">
    <location>
        <position position="100"/>
    </location>
</feature>
<keyword id="KW-0413">Isomerase</keyword>
<keyword id="KW-0460">Magnesium</keyword>
<keyword id="KW-0479">Metal-binding</keyword>
<keyword id="KW-0597">Phosphoprotein</keyword>
<organism>
    <name type="scientific">Bacillus velezensis (strain DSM 23117 / BGSC 10A6 / LMG 26770 / FZB42)</name>
    <name type="common">Bacillus amyloliquefaciens subsp. plantarum</name>
    <dbReference type="NCBI Taxonomy" id="326423"/>
    <lineage>
        <taxon>Bacteria</taxon>
        <taxon>Bacillati</taxon>
        <taxon>Bacillota</taxon>
        <taxon>Bacilli</taxon>
        <taxon>Bacillales</taxon>
        <taxon>Bacillaceae</taxon>
        <taxon>Bacillus</taxon>
        <taxon>Bacillus amyloliquefaciens group</taxon>
    </lineage>
</organism>
<gene>
    <name evidence="1" type="primary">glmM</name>
    <name type="ordered locus">RBAM_002300</name>
</gene>
<comment type="function">
    <text evidence="1">Catalyzes the conversion of glucosamine-6-phosphate to glucosamine-1-phosphate.</text>
</comment>
<comment type="catalytic activity">
    <reaction evidence="1">
        <text>alpha-D-glucosamine 1-phosphate = D-glucosamine 6-phosphate</text>
        <dbReference type="Rhea" id="RHEA:23424"/>
        <dbReference type="ChEBI" id="CHEBI:58516"/>
        <dbReference type="ChEBI" id="CHEBI:58725"/>
        <dbReference type="EC" id="5.4.2.10"/>
    </reaction>
</comment>
<comment type="cofactor">
    <cofactor evidence="1">
        <name>Mg(2+)</name>
        <dbReference type="ChEBI" id="CHEBI:18420"/>
    </cofactor>
    <text evidence="1">Binds 1 Mg(2+) ion per subunit.</text>
</comment>
<comment type="PTM">
    <text evidence="1">Activated by phosphorylation.</text>
</comment>
<comment type="similarity">
    <text evidence="1">Belongs to the phosphohexose mutase family.</text>
</comment>
<sequence length="448" mass="48443">MGKYFGTDGVRGVANSELTPELAFKVGRFGGYVLTKDKQRPKVLIGRDTRISGHMLEGALVAGLLSIGAEVMRLGVISTPGVSYLTKAMDAEAGVMISASHNPVQDNGIKFFGGDGFKLSDEQEAEIERLMDEPEDKLPRPTGADLGLVNDYFEGVQKYLQFLKQTADEDFTGIHVALDCAHGATSSIATHLFADLDADVSTMGTSPNGLNINDGVGSTHPEALSAFVKEKNADIGLAFDGDGDRLIAVDEKGNIVDGDQIMYICAKYLKSEGRLKDDTVVSTVMSNLGFYKALEKEEIKSVQTAVGDRYVVEAMKKDGYNVGGEQSGHLIFLDYNTTGDGLLSAIMLVNTLKASGKTLSELADEMKKFPQLLVNVKVTDKYKVEENAKVKAVISEVEKEMNGDGRILVRPSGTEPLVRVMAEARTKELCDEYVTKIVDVVRTEMGAE</sequence>
<name>GLMM_BACVZ</name>
<proteinExistence type="inferred from homology"/>
<evidence type="ECO:0000255" key="1">
    <source>
        <dbReference type="HAMAP-Rule" id="MF_01554"/>
    </source>
</evidence>
<reference key="1">
    <citation type="journal article" date="2007" name="Nat. Biotechnol.">
        <title>Comparative analysis of the complete genome sequence of the plant growth-promoting bacterium Bacillus amyloliquefaciens FZB42.</title>
        <authorList>
            <person name="Chen X.H."/>
            <person name="Koumoutsi A."/>
            <person name="Scholz R."/>
            <person name="Eisenreich A."/>
            <person name="Schneider K."/>
            <person name="Heinemeyer I."/>
            <person name="Morgenstern B."/>
            <person name="Voss B."/>
            <person name="Hess W.R."/>
            <person name="Reva O."/>
            <person name="Junge H."/>
            <person name="Voigt B."/>
            <person name="Jungblut P.R."/>
            <person name="Vater J."/>
            <person name="Suessmuth R."/>
            <person name="Liesegang H."/>
            <person name="Strittmatter A."/>
            <person name="Gottschalk G."/>
            <person name="Borriss R."/>
        </authorList>
    </citation>
    <scope>NUCLEOTIDE SEQUENCE [LARGE SCALE GENOMIC DNA]</scope>
    <source>
        <strain>DSM 23117 / BGSC 10A6 / LMG 26770 / FZB42</strain>
    </source>
</reference>
<dbReference type="EC" id="5.4.2.10" evidence="1"/>
<dbReference type="EMBL" id="CP000560">
    <property type="protein sequence ID" value="ABS72629.1"/>
    <property type="molecule type" value="Genomic_DNA"/>
</dbReference>
<dbReference type="RefSeq" id="WP_007408011.1">
    <property type="nucleotide sequence ID" value="NC_009725.2"/>
</dbReference>
<dbReference type="SMR" id="A7Z0V3"/>
<dbReference type="GeneID" id="93079367"/>
<dbReference type="KEGG" id="bay:RBAM_002300"/>
<dbReference type="HOGENOM" id="CLU_016950_7_0_9"/>
<dbReference type="Proteomes" id="UP000001120">
    <property type="component" value="Chromosome"/>
</dbReference>
<dbReference type="GO" id="GO:0005829">
    <property type="term" value="C:cytosol"/>
    <property type="evidence" value="ECO:0007669"/>
    <property type="project" value="TreeGrafter"/>
</dbReference>
<dbReference type="GO" id="GO:0000287">
    <property type="term" value="F:magnesium ion binding"/>
    <property type="evidence" value="ECO:0007669"/>
    <property type="project" value="UniProtKB-UniRule"/>
</dbReference>
<dbReference type="GO" id="GO:0008966">
    <property type="term" value="F:phosphoglucosamine mutase activity"/>
    <property type="evidence" value="ECO:0007669"/>
    <property type="project" value="UniProtKB-UniRule"/>
</dbReference>
<dbReference type="GO" id="GO:0004615">
    <property type="term" value="F:phosphomannomutase activity"/>
    <property type="evidence" value="ECO:0007669"/>
    <property type="project" value="TreeGrafter"/>
</dbReference>
<dbReference type="GO" id="GO:0005975">
    <property type="term" value="P:carbohydrate metabolic process"/>
    <property type="evidence" value="ECO:0007669"/>
    <property type="project" value="InterPro"/>
</dbReference>
<dbReference type="GO" id="GO:0009252">
    <property type="term" value="P:peptidoglycan biosynthetic process"/>
    <property type="evidence" value="ECO:0007669"/>
    <property type="project" value="TreeGrafter"/>
</dbReference>
<dbReference type="GO" id="GO:0006048">
    <property type="term" value="P:UDP-N-acetylglucosamine biosynthetic process"/>
    <property type="evidence" value="ECO:0007669"/>
    <property type="project" value="TreeGrafter"/>
</dbReference>
<dbReference type="CDD" id="cd05802">
    <property type="entry name" value="GlmM"/>
    <property type="match status" value="1"/>
</dbReference>
<dbReference type="FunFam" id="3.30.310.50:FF:000001">
    <property type="entry name" value="Phosphoglucosamine mutase"/>
    <property type="match status" value="1"/>
</dbReference>
<dbReference type="FunFam" id="3.40.120.10:FF:000001">
    <property type="entry name" value="Phosphoglucosamine mutase"/>
    <property type="match status" value="1"/>
</dbReference>
<dbReference type="FunFam" id="3.40.120.10:FF:000002">
    <property type="entry name" value="Phosphoglucosamine mutase"/>
    <property type="match status" value="1"/>
</dbReference>
<dbReference type="Gene3D" id="3.40.120.10">
    <property type="entry name" value="Alpha-D-Glucose-1,6-Bisphosphate, subunit A, domain 3"/>
    <property type="match status" value="3"/>
</dbReference>
<dbReference type="Gene3D" id="3.30.310.50">
    <property type="entry name" value="Alpha-D-phosphohexomutase, C-terminal domain"/>
    <property type="match status" value="1"/>
</dbReference>
<dbReference type="HAMAP" id="MF_01554_B">
    <property type="entry name" value="GlmM_B"/>
    <property type="match status" value="1"/>
</dbReference>
<dbReference type="InterPro" id="IPR005844">
    <property type="entry name" value="A-D-PHexomutase_a/b/a-I"/>
</dbReference>
<dbReference type="InterPro" id="IPR016055">
    <property type="entry name" value="A-D-PHexomutase_a/b/a-I/II/III"/>
</dbReference>
<dbReference type="InterPro" id="IPR005845">
    <property type="entry name" value="A-D-PHexomutase_a/b/a-II"/>
</dbReference>
<dbReference type="InterPro" id="IPR005846">
    <property type="entry name" value="A-D-PHexomutase_a/b/a-III"/>
</dbReference>
<dbReference type="InterPro" id="IPR005843">
    <property type="entry name" value="A-D-PHexomutase_C"/>
</dbReference>
<dbReference type="InterPro" id="IPR036900">
    <property type="entry name" value="A-D-PHexomutase_C_sf"/>
</dbReference>
<dbReference type="InterPro" id="IPR016066">
    <property type="entry name" value="A-D-PHexomutase_CS"/>
</dbReference>
<dbReference type="InterPro" id="IPR005841">
    <property type="entry name" value="Alpha-D-phosphohexomutase_SF"/>
</dbReference>
<dbReference type="InterPro" id="IPR006352">
    <property type="entry name" value="GlmM_bact"/>
</dbReference>
<dbReference type="InterPro" id="IPR050060">
    <property type="entry name" value="Phosphoglucosamine_mutase"/>
</dbReference>
<dbReference type="NCBIfam" id="TIGR01455">
    <property type="entry name" value="glmM"/>
    <property type="match status" value="1"/>
</dbReference>
<dbReference type="NCBIfam" id="NF008139">
    <property type="entry name" value="PRK10887.1"/>
    <property type="match status" value="1"/>
</dbReference>
<dbReference type="PANTHER" id="PTHR42946:SF1">
    <property type="entry name" value="PHOSPHOGLUCOMUTASE (ALPHA-D-GLUCOSE-1,6-BISPHOSPHATE-DEPENDENT)"/>
    <property type="match status" value="1"/>
</dbReference>
<dbReference type="PANTHER" id="PTHR42946">
    <property type="entry name" value="PHOSPHOHEXOSE MUTASE"/>
    <property type="match status" value="1"/>
</dbReference>
<dbReference type="Pfam" id="PF02878">
    <property type="entry name" value="PGM_PMM_I"/>
    <property type="match status" value="1"/>
</dbReference>
<dbReference type="Pfam" id="PF02879">
    <property type="entry name" value="PGM_PMM_II"/>
    <property type="match status" value="1"/>
</dbReference>
<dbReference type="Pfam" id="PF02880">
    <property type="entry name" value="PGM_PMM_III"/>
    <property type="match status" value="1"/>
</dbReference>
<dbReference type="Pfam" id="PF00408">
    <property type="entry name" value="PGM_PMM_IV"/>
    <property type="match status" value="1"/>
</dbReference>
<dbReference type="PRINTS" id="PR00509">
    <property type="entry name" value="PGMPMM"/>
</dbReference>
<dbReference type="SUPFAM" id="SSF55957">
    <property type="entry name" value="Phosphoglucomutase, C-terminal domain"/>
    <property type="match status" value="1"/>
</dbReference>
<dbReference type="SUPFAM" id="SSF53738">
    <property type="entry name" value="Phosphoglucomutase, first 3 domains"/>
    <property type="match status" value="3"/>
</dbReference>
<dbReference type="PROSITE" id="PS00710">
    <property type="entry name" value="PGM_PMM"/>
    <property type="match status" value="1"/>
</dbReference>
<accession>A7Z0V3</accession>